<gene>
    <name evidence="3" type="primary">otnK</name>
    <name type="ordered locus">HI_1011</name>
</gene>
<name>OTNK_HAEIN</name>
<dbReference type="EC" id="2.7.1.217" evidence="2"/>
<dbReference type="EMBL" id="L42023">
    <property type="protein sequence ID" value="AAC22672.1"/>
    <property type="molecule type" value="Genomic_DNA"/>
</dbReference>
<dbReference type="PIR" id="C64018">
    <property type="entry name" value="C64018"/>
</dbReference>
<dbReference type="RefSeq" id="NP_439172.1">
    <property type="nucleotide sequence ID" value="NC_000907.1"/>
</dbReference>
<dbReference type="PDB" id="1YZY">
    <property type="method" value="X-ray"/>
    <property type="resolution" value="2.10 A"/>
    <property type="chains" value="A/B=1-413"/>
</dbReference>
<dbReference type="PDBsum" id="1YZY"/>
<dbReference type="SMR" id="P44093"/>
<dbReference type="STRING" id="71421.HI_1011"/>
<dbReference type="DNASU" id="950004"/>
<dbReference type="EnsemblBacteria" id="AAC22672">
    <property type="protein sequence ID" value="AAC22672"/>
    <property type="gene ID" value="HI_1011"/>
</dbReference>
<dbReference type="KEGG" id="hin:HI_1011"/>
<dbReference type="PATRIC" id="fig|71421.8.peg.1055"/>
<dbReference type="eggNOG" id="COG3395">
    <property type="taxonomic scope" value="Bacteria"/>
</dbReference>
<dbReference type="HOGENOM" id="CLU_029424_1_0_6"/>
<dbReference type="OrthoDB" id="191465at2"/>
<dbReference type="PhylomeDB" id="P44093"/>
<dbReference type="BioCyc" id="HINF71421:G1GJ1-1051-MONOMER"/>
<dbReference type="EvolutionaryTrace" id="P44093"/>
<dbReference type="Proteomes" id="UP000000579">
    <property type="component" value="Chromosome"/>
</dbReference>
<dbReference type="GO" id="GO:0005524">
    <property type="term" value="F:ATP binding"/>
    <property type="evidence" value="ECO:0007669"/>
    <property type="project" value="UniProtKB-KW"/>
</dbReference>
<dbReference type="GO" id="GO:0016301">
    <property type="term" value="F:kinase activity"/>
    <property type="evidence" value="ECO:0007669"/>
    <property type="project" value="UniProtKB-KW"/>
</dbReference>
<dbReference type="Gene3D" id="3.40.980.20">
    <property type="entry name" value="Four-carbon acid sugar kinase, nucleotide binding domain"/>
    <property type="match status" value="1"/>
</dbReference>
<dbReference type="Gene3D" id="3.40.50.10840">
    <property type="entry name" value="Putative sugar-binding, N-terminal domain"/>
    <property type="match status" value="1"/>
</dbReference>
<dbReference type="InterPro" id="IPR010737">
    <property type="entry name" value="4-carb_acid_sugar_kinase_N"/>
</dbReference>
<dbReference type="InterPro" id="IPR037051">
    <property type="entry name" value="4-carb_acid_sugar_kinase_N_sf"/>
</dbReference>
<dbReference type="InterPro" id="IPR031475">
    <property type="entry name" value="NBD_C"/>
</dbReference>
<dbReference type="InterPro" id="IPR042213">
    <property type="entry name" value="NBD_C_sf"/>
</dbReference>
<dbReference type="InterPro" id="IPR050007">
    <property type="entry name" value="OtnK"/>
</dbReference>
<dbReference type="NCBIfam" id="NF043035">
    <property type="entry name" value="OxoTetrKin"/>
    <property type="match status" value="1"/>
</dbReference>
<dbReference type="Pfam" id="PF17042">
    <property type="entry name" value="NBD_C"/>
    <property type="match status" value="1"/>
</dbReference>
<dbReference type="Pfam" id="PF07005">
    <property type="entry name" value="SBD_N"/>
    <property type="match status" value="1"/>
</dbReference>
<dbReference type="SUPFAM" id="SSF142764">
    <property type="entry name" value="YgbK-like"/>
    <property type="match status" value="1"/>
</dbReference>
<protein>
    <recommendedName>
        <fullName evidence="3">3-oxo-tetronate kinase</fullName>
        <ecNumber evidence="2">2.7.1.217</ecNumber>
    </recommendedName>
    <alternativeName>
        <fullName evidence="4">3-dehydrotetronate 4-kinase</fullName>
    </alternativeName>
</protein>
<comment type="function">
    <text evidence="2">Catalyzes the ATP-dependent phosphorylation of 3-oxo-tetronate to 3-oxo-tetronate 4-phosphate.</text>
</comment>
<comment type="catalytic activity">
    <reaction evidence="2">
        <text>3-dehydro-L-erythronate + ATP = 3-dehydro-4-O-phospho-L-erythronate + ADP + H(+)</text>
        <dbReference type="Rhea" id="RHEA:52552"/>
        <dbReference type="ChEBI" id="CHEBI:15378"/>
        <dbReference type="ChEBI" id="CHEBI:30616"/>
        <dbReference type="ChEBI" id="CHEBI:136592"/>
        <dbReference type="ChEBI" id="CHEBI:136670"/>
        <dbReference type="ChEBI" id="CHEBI:456216"/>
        <dbReference type="EC" id="2.7.1.217"/>
    </reaction>
</comment>
<comment type="catalytic activity">
    <reaction evidence="2">
        <text>3-dehydro-D-erythronate + ATP = 3-dehydro-4-O-phospho-D-erythronate + ADP + H(+)</text>
        <dbReference type="Rhea" id="RHEA:52556"/>
        <dbReference type="ChEBI" id="CHEBI:15378"/>
        <dbReference type="ChEBI" id="CHEBI:30616"/>
        <dbReference type="ChEBI" id="CHEBI:57958"/>
        <dbReference type="ChEBI" id="CHEBI:136593"/>
        <dbReference type="ChEBI" id="CHEBI:456216"/>
        <dbReference type="EC" id="2.7.1.217"/>
    </reaction>
</comment>
<comment type="similarity">
    <text evidence="4">Belongs to the four-carbon acid sugar kinase family.</text>
</comment>
<keyword id="KW-0002">3D-structure</keyword>
<keyword id="KW-0067">ATP-binding</keyword>
<keyword id="KW-0119">Carbohydrate metabolism</keyword>
<keyword id="KW-0418">Kinase</keyword>
<keyword id="KW-0547">Nucleotide-binding</keyword>
<keyword id="KW-1185">Reference proteome</keyword>
<keyword id="KW-0808">Transferase</keyword>
<reference key="1">
    <citation type="journal article" date="1995" name="Science">
        <title>Whole-genome random sequencing and assembly of Haemophilus influenzae Rd.</title>
        <authorList>
            <person name="Fleischmann R.D."/>
            <person name="Adams M.D."/>
            <person name="White O."/>
            <person name="Clayton R.A."/>
            <person name="Kirkness E.F."/>
            <person name="Kerlavage A.R."/>
            <person name="Bult C.J."/>
            <person name="Tomb J.-F."/>
            <person name="Dougherty B.A."/>
            <person name="Merrick J.M."/>
            <person name="McKenney K."/>
            <person name="Sutton G.G."/>
            <person name="FitzHugh W."/>
            <person name="Fields C.A."/>
            <person name="Gocayne J.D."/>
            <person name="Scott J.D."/>
            <person name="Shirley R."/>
            <person name="Liu L.-I."/>
            <person name="Glodek A."/>
            <person name="Kelley J.M."/>
            <person name="Weidman J.F."/>
            <person name="Phillips C.A."/>
            <person name="Spriggs T."/>
            <person name="Hedblom E."/>
            <person name="Cotton M.D."/>
            <person name="Utterback T.R."/>
            <person name="Hanna M.C."/>
            <person name="Nguyen D.T."/>
            <person name="Saudek D.M."/>
            <person name="Brandon R.C."/>
            <person name="Fine L.D."/>
            <person name="Fritchman J.L."/>
            <person name="Fuhrmann J.L."/>
            <person name="Geoghagen N.S.M."/>
            <person name="Gnehm C.L."/>
            <person name="McDonald L.A."/>
            <person name="Small K.V."/>
            <person name="Fraser C.M."/>
            <person name="Smith H.O."/>
            <person name="Venter J.C."/>
        </authorList>
    </citation>
    <scope>NUCLEOTIDE SEQUENCE [LARGE SCALE GENOMIC DNA]</scope>
    <source>
        <strain>ATCC 51907 / DSM 11121 / KW20 / Rd</strain>
    </source>
</reference>
<reference key="2">
    <citation type="journal article" date="2016" name="Proc. Natl. Acad. Sci. U.S.A.">
        <title>Assignment of function to a domain of unknown function: DUF1537 is a new kinase family in catabolic pathways for acid sugars.</title>
        <authorList>
            <person name="Zhang X."/>
            <person name="Carter M.S."/>
            <person name="Vetting M.W."/>
            <person name="San Francisco B."/>
            <person name="Zhao S."/>
            <person name="Al-Obaidi N.F."/>
            <person name="Solbiati J.O."/>
            <person name="Thiaville J.J."/>
            <person name="de Crecy-Lagard V."/>
            <person name="Jacobson M.P."/>
            <person name="Almo S.C."/>
            <person name="Gerlt J.A."/>
        </authorList>
    </citation>
    <scope>FUNCTION</scope>
    <scope>CATALYTIC ACTIVITY</scope>
    <source>
        <strain>ATCC 51907 / DSM 11121 / KW20 / Rd</strain>
    </source>
</reference>
<reference evidence="5" key="3">
    <citation type="submission" date="2005-02" db="PDB data bank">
        <title>Crystal structure of the Haemophilus influenzae hypothetical protein HI1011.</title>
        <authorList>
            <person name="Patskovsky Y."/>
            <person name="Almo S.C."/>
        </authorList>
    </citation>
    <scope>X-RAY CRYSTALLOGRAPHY (2.10 ANGSTROMS)</scope>
</reference>
<evidence type="ECO:0000250" key="1">
    <source>
        <dbReference type="UniProtKB" id="Q0KBC8"/>
    </source>
</evidence>
<evidence type="ECO:0000269" key="2">
    <source>
    </source>
</evidence>
<evidence type="ECO:0000303" key="3">
    <source>
    </source>
</evidence>
<evidence type="ECO:0000305" key="4"/>
<evidence type="ECO:0007744" key="5">
    <source>
        <dbReference type="PDB" id="1YZY"/>
    </source>
</evidence>
<evidence type="ECO:0007829" key="6">
    <source>
        <dbReference type="PDB" id="1YZY"/>
    </source>
</evidence>
<sequence>MLGVIADDFTGASDIASFLVENGLSTVQMNGVPTQSLNSKVDAIVISLKSRSNPVNEAIEQSLRAYQWLKENGCTQFYFKYCSTFDSTAKGNIGPVTDALLDELNEDFTVITPALPVNGRTIFNGYLFVGDVLLSESGMKNHPITPMVDANLMRLMDAQAKGKTGLVAYADVIKGASRVQECFAELKAQGYRYAVVDAVDNSQLEVLAEAVADFKLVTGGSGLGAYMAARLSGGKKGTNAFTPTKGKTVVLSGSCSVMTNKQVEKYREKAPHFQLDVEQAIHNENYIEQLYQWVIANLDSEFAPMVYATVPPDALKAIQHQFGVDQASHAIENTFAKLAAKLKQYGVTNFITAGGETSSIVVQELGFTGFHIGKQIAPGVPWLKAVEEDIFLALKSGNFGKEDFFEYAQGMFL</sequence>
<proteinExistence type="evidence at protein level"/>
<feature type="chain" id="PRO_0000169314" description="3-oxo-tetronate kinase">
    <location>
        <begin position="1"/>
        <end position="413"/>
    </location>
</feature>
<feature type="binding site" evidence="1">
    <location>
        <position position="254"/>
    </location>
    <ligand>
        <name>ATP</name>
        <dbReference type="ChEBI" id="CHEBI:30616"/>
    </ligand>
</feature>
<feature type="binding site" evidence="1">
    <location>
        <begin position="354"/>
        <end position="357"/>
    </location>
    <ligand>
        <name>ATP</name>
        <dbReference type="ChEBI" id="CHEBI:30616"/>
    </ligand>
</feature>
<feature type="binding site" evidence="1">
    <location>
        <position position="397"/>
    </location>
    <ligand>
        <name>ATP</name>
        <dbReference type="ChEBI" id="CHEBI:30616"/>
    </ligand>
</feature>
<feature type="strand" evidence="6">
    <location>
        <begin position="3"/>
        <end position="8"/>
    </location>
</feature>
<feature type="helix" evidence="6">
    <location>
        <begin position="9"/>
        <end position="20"/>
    </location>
</feature>
<feature type="turn" evidence="6">
    <location>
        <begin position="21"/>
        <end position="23"/>
    </location>
</feature>
<feature type="strand" evidence="6">
    <location>
        <begin position="26"/>
        <end position="31"/>
    </location>
</feature>
<feature type="strand" evidence="6">
    <location>
        <begin position="42"/>
        <end position="47"/>
    </location>
</feature>
<feature type="strand" evidence="6">
    <location>
        <begin position="51"/>
        <end position="53"/>
    </location>
</feature>
<feature type="helix" evidence="6">
    <location>
        <begin position="55"/>
        <end position="71"/>
    </location>
</feature>
<feature type="strand" evidence="6">
    <location>
        <begin position="76"/>
        <end position="80"/>
    </location>
</feature>
<feature type="helix" evidence="6">
    <location>
        <begin position="93"/>
        <end position="104"/>
    </location>
</feature>
<feature type="strand" evidence="6">
    <location>
        <begin position="109"/>
        <end position="111"/>
    </location>
</feature>
<feature type="helix" evidence="6">
    <location>
        <begin position="116"/>
        <end position="118"/>
    </location>
</feature>
<feature type="strand" evidence="6">
    <location>
        <begin position="120"/>
        <end position="123"/>
    </location>
</feature>
<feature type="strand" evidence="6">
    <location>
        <begin position="126"/>
        <end position="129"/>
    </location>
</feature>
<feature type="helix" evidence="6">
    <location>
        <begin position="134"/>
        <end position="136"/>
    </location>
</feature>
<feature type="helix" evidence="6">
    <location>
        <begin position="138"/>
        <end position="141"/>
    </location>
</feature>
<feature type="strand" evidence="6">
    <location>
        <begin position="143"/>
        <end position="145"/>
    </location>
</feature>
<feature type="helix" evidence="6">
    <location>
        <begin position="152"/>
        <end position="159"/>
    </location>
</feature>
<feature type="strand" evidence="6">
    <location>
        <begin position="164"/>
        <end position="167"/>
    </location>
</feature>
<feature type="helix" evidence="6">
    <location>
        <begin position="169"/>
        <end position="172"/>
    </location>
</feature>
<feature type="helix" evidence="6">
    <location>
        <begin position="176"/>
        <end position="188"/>
    </location>
</feature>
<feature type="strand" evidence="6">
    <location>
        <begin position="192"/>
        <end position="196"/>
    </location>
</feature>
<feature type="strand" evidence="6">
    <location>
        <begin position="198"/>
        <end position="200"/>
    </location>
</feature>
<feature type="helix" evidence="6">
    <location>
        <begin position="202"/>
        <end position="210"/>
    </location>
</feature>
<feature type="turn" evidence="6">
    <location>
        <begin position="211"/>
        <end position="213"/>
    </location>
</feature>
<feature type="strand" evidence="6">
    <location>
        <begin position="215"/>
        <end position="220"/>
    </location>
</feature>
<feature type="helix" evidence="6">
    <location>
        <begin position="221"/>
        <end position="232"/>
    </location>
</feature>
<feature type="helix" evidence="6">
    <location>
        <begin position="237"/>
        <end position="239"/>
    </location>
</feature>
<feature type="strand" evidence="6">
    <location>
        <begin position="248"/>
        <end position="252"/>
    </location>
</feature>
<feature type="helix" evidence="6">
    <location>
        <begin position="257"/>
        <end position="266"/>
    </location>
</feature>
<feature type="turn" evidence="6">
    <location>
        <begin position="267"/>
        <end position="269"/>
    </location>
</feature>
<feature type="strand" evidence="6">
    <location>
        <begin position="272"/>
        <end position="274"/>
    </location>
</feature>
<feature type="helix" evidence="6">
    <location>
        <begin position="277"/>
        <end position="282"/>
    </location>
</feature>
<feature type="helix" evidence="6">
    <location>
        <begin position="286"/>
        <end position="295"/>
    </location>
</feature>
<feature type="turn" evidence="6">
    <location>
        <begin position="296"/>
        <end position="299"/>
    </location>
</feature>
<feature type="strand" evidence="6">
    <location>
        <begin position="300"/>
        <end position="302"/>
    </location>
</feature>
<feature type="strand" evidence="6">
    <location>
        <begin position="305"/>
        <end position="307"/>
    </location>
</feature>
<feature type="helix" evidence="6">
    <location>
        <begin position="312"/>
        <end position="319"/>
    </location>
</feature>
<feature type="helix" evidence="6">
    <location>
        <begin position="324"/>
        <end position="345"/>
    </location>
</feature>
<feature type="strand" evidence="6">
    <location>
        <begin position="349"/>
        <end position="354"/>
    </location>
</feature>
<feature type="helix" evidence="6">
    <location>
        <begin position="355"/>
        <end position="365"/>
    </location>
</feature>
<feature type="strand" evidence="6">
    <location>
        <begin position="369"/>
        <end position="377"/>
    </location>
</feature>
<feature type="strand" evidence="6">
    <location>
        <begin position="380"/>
        <end position="389"/>
    </location>
</feature>
<feature type="strand" evidence="6">
    <location>
        <begin position="391"/>
        <end position="395"/>
    </location>
</feature>
<feature type="helix" evidence="6">
    <location>
        <begin position="404"/>
        <end position="410"/>
    </location>
</feature>
<accession>P44093</accession>
<organism>
    <name type="scientific">Haemophilus influenzae (strain ATCC 51907 / DSM 11121 / KW20 / Rd)</name>
    <dbReference type="NCBI Taxonomy" id="71421"/>
    <lineage>
        <taxon>Bacteria</taxon>
        <taxon>Pseudomonadati</taxon>
        <taxon>Pseudomonadota</taxon>
        <taxon>Gammaproteobacteria</taxon>
        <taxon>Pasteurellales</taxon>
        <taxon>Pasteurellaceae</taxon>
        <taxon>Haemophilus</taxon>
    </lineage>
</organism>